<feature type="chain" id="PRO_1000188886" description="Urease subunit alpha">
    <location>
        <begin position="1"/>
        <end position="571"/>
    </location>
</feature>
<feature type="domain" description="Urease" evidence="1">
    <location>
        <begin position="131"/>
        <end position="571"/>
    </location>
</feature>
<feature type="active site" description="Proton donor" evidence="1">
    <location>
        <position position="322"/>
    </location>
</feature>
<feature type="binding site" evidence="1">
    <location>
        <position position="136"/>
    </location>
    <ligand>
        <name>Ni(2+)</name>
        <dbReference type="ChEBI" id="CHEBI:49786"/>
        <label>1</label>
    </ligand>
</feature>
<feature type="binding site" evidence="1">
    <location>
        <position position="138"/>
    </location>
    <ligand>
        <name>Ni(2+)</name>
        <dbReference type="ChEBI" id="CHEBI:49786"/>
        <label>1</label>
    </ligand>
</feature>
<feature type="binding site" description="via carbamate group" evidence="1">
    <location>
        <position position="219"/>
    </location>
    <ligand>
        <name>Ni(2+)</name>
        <dbReference type="ChEBI" id="CHEBI:49786"/>
        <label>1</label>
    </ligand>
</feature>
<feature type="binding site" description="via carbamate group" evidence="1">
    <location>
        <position position="219"/>
    </location>
    <ligand>
        <name>Ni(2+)</name>
        <dbReference type="ChEBI" id="CHEBI:49786"/>
        <label>2</label>
    </ligand>
</feature>
<feature type="binding site" evidence="1">
    <location>
        <position position="221"/>
    </location>
    <ligand>
        <name>substrate</name>
    </ligand>
</feature>
<feature type="binding site" evidence="1">
    <location>
        <position position="248"/>
    </location>
    <ligand>
        <name>Ni(2+)</name>
        <dbReference type="ChEBI" id="CHEBI:49786"/>
        <label>2</label>
    </ligand>
</feature>
<feature type="binding site" evidence="1">
    <location>
        <position position="274"/>
    </location>
    <ligand>
        <name>Ni(2+)</name>
        <dbReference type="ChEBI" id="CHEBI:49786"/>
        <label>2</label>
    </ligand>
</feature>
<feature type="binding site" evidence="1">
    <location>
        <position position="362"/>
    </location>
    <ligand>
        <name>Ni(2+)</name>
        <dbReference type="ChEBI" id="CHEBI:49786"/>
        <label>1</label>
    </ligand>
</feature>
<feature type="modified residue" description="N6-carboxylysine" evidence="1">
    <location>
        <position position="219"/>
    </location>
</feature>
<organism>
    <name type="scientific">Nostoc punctiforme (strain ATCC 29133 / PCC 73102)</name>
    <dbReference type="NCBI Taxonomy" id="63737"/>
    <lineage>
        <taxon>Bacteria</taxon>
        <taxon>Bacillati</taxon>
        <taxon>Cyanobacteriota</taxon>
        <taxon>Cyanophyceae</taxon>
        <taxon>Nostocales</taxon>
        <taxon>Nostocaceae</taxon>
        <taxon>Nostoc</taxon>
    </lineage>
</organism>
<reference key="1">
    <citation type="journal article" date="2013" name="Plant Physiol.">
        <title>A Nostoc punctiforme Sugar Transporter Necessary to Establish a Cyanobacterium-Plant Symbiosis.</title>
        <authorList>
            <person name="Ekman M."/>
            <person name="Picossi S."/>
            <person name="Campbell E.L."/>
            <person name="Meeks J.C."/>
            <person name="Flores E."/>
        </authorList>
    </citation>
    <scope>NUCLEOTIDE SEQUENCE [LARGE SCALE GENOMIC DNA]</scope>
    <source>
        <strain>ATCC 29133 / PCC 73102</strain>
    </source>
</reference>
<sequence>MPYRMDRRAYAETYGPTVGDRIRLADTELFIEVEQDFTSYGDEVKFGGGKVIRDGMGQSPIANADGAVDLVITNALILDWWGIVKADIGIKDGKIFKIGKAGNPYIQDNVDIIIGPGTEALAGEGMILTAGGIDAHIHFICPQQIEVAIASGITTMIGGGTGPATGTNATTCTPGPWNIYRMLQAADAFPVNLGFLGKGNASKPQGLVEQVAAGAMGLKLHEDWGTTPAAIDTCLSVAATYDVQVAIHTDTLNEAGFVEDTIAAFKNRVIHTYHTEGAGGGHAPDIIKVCGQANVLPSSTNPTRPYTLNTLDEHLDMLMVCHHLDPAIAEDVAFAESRIRRETIAAEDILHDLGAFSMISSDSQAMGRVGEVIIRTWQTSHKMKVQRGILNPQGNEQKADNFRAKRYVAKYTINPAIAHGIAQYVGSVEEGKLADLCLWHPAFFGVKPEIVIKGGMIAWSQMGDANASIPTPQPVYMRPMFGSFAGARHATSLTFVSQAALENEIPSQLGLQKAAVAVSGTRQLSKRDMKLNDALPHIEVDPETYQVRADGELLICEPATVLPMAQRYFLF</sequence>
<accession>B2IT66</accession>
<proteinExistence type="inferred from homology"/>
<evidence type="ECO:0000255" key="1">
    <source>
        <dbReference type="HAMAP-Rule" id="MF_01953"/>
    </source>
</evidence>
<gene>
    <name evidence="1" type="primary">ureC</name>
    <name type="ordered locus">Npun_F0825</name>
</gene>
<name>URE1_NOSP7</name>
<comment type="catalytic activity">
    <reaction evidence="1">
        <text>urea + 2 H2O + H(+) = hydrogencarbonate + 2 NH4(+)</text>
        <dbReference type="Rhea" id="RHEA:20557"/>
        <dbReference type="ChEBI" id="CHEBI:15377"/>
        <dbReference type="ChEBI" id="CHEBI:15378"/>
        <dbReference type="ChEBI" id="CHEBI:16199"/>
        <dbReference type="ChEBI" id="CHEBI:17544"/>
        <dbReference type="ChEBI" id="CHEBI:28938"/>
        <dbReference type="EC" id="3.5.1.5"/>
    </reaction>
</comment>
<comment type="cofactor">
    <cofactor evidence="1">
        <name>Ni cation</name>
        <dbReference type="ChEBI" id="CHEBI:25516"/>
    </cofactor>
    <text evidence="1">Binds 2 nickel ions per subunit.</text>
</comment>
<comment type="pathway">
    <text evidence="1">Nitrogen metabolism; urea degradation; CO(2) and NH(3) from urea (urease route): step 1/1.</text>
</comment>
<comment type="subunit">
    <text evidence="1">Heterotrimer of UreA (gamma), UreB (beta) and UreC (alpha) subunits. Three heterotrimers associate to form the active enzyme.</text>
</comment>
<comment type="subcellular location">
    <subcellularLocation>
        <location evidence="1">Cytoplasm</location>
    </subcellularLocation>
</comment>
<comment type="PTM">
    <text evidence="1">Carboxylation allows a single lysine to coordinate two nickel ions.</text>
</comment>
<comment type="similarity">
    <text evidence="1">Belongs to the metallo-dependent hydrolases superfamily. Urease alpha subunit family.</text>
</comment>
<keyword id="KW-0963">Cytoplasm</keyword>
<keyword id="KW-0378">Hydrolase</keyword>
<keyword id="KW-0479">Metal-binding</keyword>
<keyword id="KW-0533">Nickel</keyword>
<keyword id="KW-1185">Reference proteome</keyword>
<protein>
    <recommendedName>
        <fullName evidence="1">Urease subunit alpha</fullName>
        <ecNumber evidence="1">3.5.1.5</ecNumber>
    </recommendedName>
    <alternativeName>
        <fullName evidence="1">Urea amidohydrolase subunit alpha</fullName>
    </alternativeName>
</protein>
<dbReference type="EC" id="3.5.1.5" evidence="1"/>
<dbReference type="EMBL" id="CP001037">
    <property type="protein sequence ID" value="ACC79564.1"/>
    <property type="molecule type" value="Genomic_DNA"/>
</dbReference>
<dbReference type="RefSeq" id="WP_012407586.1">
    <property type="nucleotide sequence ID" value="NC_010628.1"/>
</dbReference>
<dbReference type="SMR" id="B2IT66"/>
<dbReference type="STRING" id="63737.Npun_F0825"/>
<dbReference type="EnsemblBacteria" id="ACC79564">
    <property type="protein sequence ID" value="ACC79564"/>
    <property type="gene ID" value="Npun_F0825"/>
</dbReference>
<dbReference type="KEGG" id="npu:Npun_F0825"/>
<dbReference type="eggNOG" id="COG0804">
    <property type="taxonomic scope" value="Bacteria"/>
</dbReference>
<dbReference type="HOGENOM" id="CLU_000980_2_0_3"/>
<dbReference type="OrthoDB" id="9802793at2"/>
<dbReference type="PhylomeDB" id="B2IT66"/>
<dbReference type="UniPathway" id="UPA00258">
    <property type="reaction ID" value="UER00370"/>
</dbReference>
<dbReference type="Proteomes" id="UP000001191">
    <property type="component" value="Chromosome"/>
</dbReference>
<dbReference type="GO" id="GO:0005737">
    <property type="term" value="C:cytoplasm"/>
    <property type="evidence" value="ECO:0007669"/>
    <property type="project" value="UniProtKB-SubCell"/>
</dbReference>
<dbReference type="GO" id="GO:0016151">
    <property type="term" value="F:nickel cation binding"/>
    <property type="evidence" value="ECO:0007669"/>
    <property type="project" value="UniProtKB-UniRule"/>
</dbReference>
<dbReference type="GO" id="GO:0009039">
    <property type="term" value="F:urease activity"/>
    <property type="evidence" value="ECO:0007669"/>
    <property type="project" value="UniProtKB-UniRule"/>
</dbReference>
<dbReference type="GO" id="GO:0043419">
    <property type="term" value="P:urea catabolic process"/>
    <property type="evidence" value="ECO:0007669"/>
    <property type="project" value="UniProtKB-UniRule"/>
</dbReference>
<dbReference type="CDD" id="cd00375">
    <property type="entry name" value="Urease_alpha"/>
    <property type="match status" value="1"/>
</dbReference>
<dbReference type="Gene3D" id="3.20.20.140">
    <property type="entry name" value="Metal-dependent hydrolases"/>
    <property type="match status" value="1"/>
</dbReference>
<dbReference type="Gene3D" id="2.30.40.10">
    <property type="entry name" value="Urease, subunit C, domain 1"/>
    <property type="match status" value="1"/>
</dbReference>
<dbReference type="HAMAP" id="MF_01953">
    <property type="entry name" value="Urease_alpha"/>
    <property type="match status" value="1"/>
</dbReference>
<dbReference type="InterPro" id="IPR006680">
    <property type="entry name" value="Amidohydro-rel"/>
</dbReference>
<dbReference type="InterPro" id="IPR011059">
    <property type="entry name" value="Metal-dep_hydrolase_composite"/>
</dbReference>
<dbReference type="InterPro" id="IPR032466">
    <property type="entry name" value="Metal_Hydrolase"/>
</dbReference>
<dbReference type="InterPro" id="IPR011612">
    <property type="entry name" value="Urease_alpha_N_dom"/>
</dbReference>
<dbReference type="InterPro" id="IPR050112">
    <property type="entry name" value="Urease_alpha_subunit"/>
</dbReference>
<dbReference type="InterPro" id="IPR017950">
    <property type="entry name" value="Urease_AS"/>
</dbReference>
<dbReference type="InterPro" id="IPR005848">
    <property type="entry name" value="Urease_asu"/>
</dbReference>
<dbReference type="InterPro" id="IPR017951">
    <property type="entry name" value="Urease_asu_c"/>
</dbReference>
<dbReference type="InterPro" id="IPR029754">
    <property type="entry name" value="Urease_Ni-bd"/>
</dbReference>
<dbReference type="NCBIfam" id="NF009685">
    <property type="entry name" value="PRK13206.1"/>
    <property type="match status" value="1"/>
</dbReference>
<dbReference type="NCBIfam" id="NF009686">
    <property type="entry name" value="PRK13207.1"/>
    <property type="match status" value="1"/>
</dbReference>
<dbReference type="NCBIfam" id="TIGR01792">
    <property type="entry name" value="urease_alph"/>
    <property type="match status" value="1"/>
</dbReference>
<dbReference type="PANTHER" id="PTHR43440">
    <property type="entry name" value="UREASE"/>
    <property type="match status" value="1"/>
</dbReference>
<dbReference type="PANTHER" id="PTHR43440:SF1">
    <property type="entry name" value="UREASE"/>
    <property type="match status" value="1"/>
</dbReference>
<dbReference type="Pfam" id="PF01979">
    <property type="entry name" value="Amidohydro_1"/>
    <property type="match status" value="1"/>
</dbReference>
<dbReference type="Pfam" id="PF00449">
    <property type="entry name" value="Urease_alpha"/>
    <property type="match status" value="1"/>
</dbReference>
<dbReference type="PRINTS" id="PR01752">
    <property type="entry name" value="UREASE"/>
</dbReference>
<dbReference type="SUPFAM" id="SSF51338">
    <property type="entry name" value="Composite domain of metallo-dependent hydrolases"/>
    <property type="match status" value="2"/>
</dbReference>
<dbReference type="SUPFAM" id="SSF51556">
    <property type="entry name" value="Metallo-dependent hydrolases"/>
    <property type="match status" value="1"/>
</dbReference>
<dbReference type="PROSITE" id="PS01120">
    <property type="entry name" value="UREASE_1"/>
    <property type="match status" value="1"/>
</dbReference>
<dbReference type="PROSITE" id="PS00145">
    <property type="entry name" value="UREASE_2"/>
    <property type="match status" value="1"/>
</dbReference>
<dbReference type="PROSITE" id="PS51368">
    <property type="entry name" value="UREASE_3"/>
    <property type="match status" value="1"/>
</dbReference>